<keyword id="KW-1015">Disulfide bond</keyword>
<keyword id="KW-0245">EGF-like domain</keyword>
<keyword id="KW-0166">Nematocyst</keyword>
<keyword id="KW-0964">Secreted</keyword>
<keyword id="KW-0732">Signal</keyword>
<feature type="signal peptide" evidence="1">
    <location>
        <begin position="1" status="less than"/>
        <end position="6"/>
    </location>
</feature>
<feature type="propeptide" id="PRO_0000433676" evidence="6">
    <location>
        <begin position="7"/>
        <end position="12"/>
    </location>
</feature>
<feature type="chain" id="PRO_0000433677" description="U-actitoxin-Avd12b" evidence="1">
    <location>
        <begin position="13"/>
        <end position="60"/>
    </location>
</feature>
<feature type="domain" description="EGF-like" evidence="2">
    <location>
        <begin position="14"/>
        <end position="56"/>
    </location>
</feature>
<feature type="disulfide bond" evidence="2">
    <location>
        <begin position="18"/>
        <end position="33"/>
    </location>
</feature>
<feature type="disulfide bond" evidence="2">
    <location>
        <begin position="27"/>
        <end position="44"/>
    </location>
</feature>
<feature type="disulfide bond" evidence="2">
    <location>
        <begin position="46"/>
        <end position="55"/>
    </location>
</feature>
<feature type="non-terminal residue" evidence="3">
    <location>
        <position position="1"/>
    </location>
</feature>
<organism>
    <name type="scientific">Anemonia viridis</name>
    <name type="common">Snakelocks anemone</name>
    <dbReference type="NCBI Taxonomy" id="51769"/>
    <lineage>
        <taxon>Eukaryota</taxon>
        <taxon>Metazoa</taxon>
        <taxon>Cnidaria</taxon>
        <taxon>Anthozoa</taxon>
        <taxon>Hexacorallia</taxon>
        <taxon>Actiniaria</taxon>
        <taxon>Actiniidae</taxon>
        <taxon>Anemonia</taxon>
    </lineage>
</organism>
<comment type="function">
    <text evidence="1">Has both toxic and EGF activity. Its EGF activity consists of rounding cells (morphological change) and inducing tyrosine phosphorylation of the EGFR in A431 cells, but with a lower potency that human EGF.</text>
</comment>
<comment type="subcellular location">
    <subcellularLocation>
        <location evidence="5">Secreted</location>
    </subcellularLocation>
    <subcellularLocation>
        <location evidence="5">Nematocyst</location>
    </subcellularLocation>
</comment>
<comment type="similarity">
    <text evidence="5">Belongs to the EGF domain peptide family.</text>
</comment>
<comment type="caution">
    <text evidence="5">Opinions are divided on whether Anemonia viridis (Forsskal, 1775) and Anemonia sulcata (Pennant, 1777) are separate species.</text>
</comment>
<dbReference type="EMBL" id="FK749754">
    <property type="status" value="NOT_ANNOTATED_CDS"/>
    <property type="molecule type" value="mRNA"/>
</dbReference>
<dbReference type="SMR" id="P0DMZ0"/>
<dbReference type="GO" id="GO:0005576">
    <property type="term" value="C:extracellular region"/>
    <property type="evidence" value="ECO:0007669"/>
    <property type="project" value="UniProtKB-SubCell"/>
</dbReference>
<dbReference type="GO" id="GO:0042151">
    <property type="term" value="C:nematocyst"/>
    <property type="evidence" value="ECO:0007669"/>
    <property type="project" value="UniProtKB-SubCell"/>
</dbReference>
<dbReference type="CDD" id="cd00054">
    <property type="entry name" value="EGF_CA"/>
    <property type="match status" value="1"/>
</dbReference>
<dbReference type="Gene3D" id="2.10.25.10">
    <property type="entry name" value="Laminin"/>
    <property type="match status" value="1"/>
</dbReference>
<dbReference type="InterPro" id="IPR000742">
    <property type="entry name" value="EGF-like_dom"/>
</dbReference>
<dbReference type="Pfam" id="PF00008">
    <property type="entry name" value="EGF"/>
    <property type="match status" value="1"/>
</dbReference>
<dbReference type="SUPFAM" id="SSF57196">
    <property type="entry name" value="EGF/Laminin"/>
    <property type="match status" value="1"/>
</dbReference>
<dbReference type="PROSITE" id="PS00022">
    <property type="entry name" value="EGF_1"/>
    <property type="match status" value="1"/>
</dbReference>
<dbReference type="PROSITE" id="PS50026">
    <property type="entry name" value="EGF_3"/>
    <property type="match status" value="1"/>
</dbReference>
<protein>
    <recommendedName>
        <fullName evidence="4">U-actitoxin-Avd12b</fullName>
        <shortName evidence="4">U-AITX-Avd12b</shortName>
    </recommendedName>
    <alternativeName>
        <fullName evidence="3">Gigantoxin-5</fullName>
        <shortName evidence="3">Gigt 5</shortName>
    </alternativeName>
</protein>
<name>GIG5_ANEVI</name>
<accession>P0DMZ0</accession>
<proteinExistence type="evidence at transcript level"/>
<sequence>SKEGMSYEEPENDEGVACTGQYAESFCLNGGTCRYIQSIGEYYCICVGDYTGHRCEKKQV</sequence>
<reference key="1">
    <citation type="journal article" date="2009" name="BMC Genomics">
        <title>Comprehensive EST analysis of the symbiotic sea anemone, Anemonia viridis.</title>
        <authorList>
            <person name="Sabourault C."/>
            <person name="Ganot P."/>
            <person name="Deleury E."/>
            <person name="Allemand D."/>
            <person name="Furla P."/>
        </authorList>
    </citation>
    <scope>NUCLEOTIDE SEQUENCE [MRNA]</scope>
</reference>
<reference key="2">
    <citation type="journal article" date="2011" name="BMC Genomics">
        <title>The mining of toxin-like polypeptides from EST database by single residue distribution analysis.</title>
        <authorList>
            <person name="Kozlov S."/>
            <person name="Grishin E."/>
        </authorList>
    </citation>
    <scope>NOMENCLATURE</scope>
</reference>
<reference key="3">
    <citation type="journal article" date="2012" name="Toxicon">
        <title>Development of a rational nomenclature for naming peptide and protein toxins from sea anemones.</title>
        <authorList>
            <person name="Oliveira J.S."/>
            <person name="Fuentes-Silva D."/>
            <person name="King G.F."/>
        </authorList>
    </citation>
    <scope>NOMENCLATURE</scope>
</reference>
<evidence type="ECO:0000250" key="1">
    <source>
        <dbReference type="UniProtKB" id="Q76CA1"/>
    </source>
</evidence>
<evidence type="ECO:0000255" key="2">
    <source>
        <dbReference type="PROSITE-ProRule" id="PRU00076"/>
    </source>
</evidence>
<evidence type="ECO:0000303" key="3">
    <source>
    </source>
</evidence>
<evidence type="ECO:0000303" key="4">
    <source>
    </source>
</evidence>
<evidence type="ECO:0000305" key="5"/>
<evidence type="ECO:0000305" key="6">
    <source>
    </source>
</evidence>